<protein>
    <recommendedName>
        <fullName evidence="1">ATP synthase subunit b</fullName>
    </recommendedName>
    <alternativeName>
        <fullName evidence="1">ATP synthase F(0) sector subunit b</fullName>
    </alternativeName>
    <alternativeName>
        <fullName evidence="1">ATPase subunit I</fullName>
    </alternativeName>
    <alternativeName>
        <fullName evidence="1">F-type ATPase subunit b</fullName>
        <shortName evidence="1">F-ATPase subunit b</shortName>
    </alternativeName>
</protein>
<gene>
    <name evidence="1" type="primary">atpF</name>
    <name type="ordered locus">HNE_1922</name>
</gene>
<accession>Q0C0X0</accession>
<name>ATPF_HYPNA</name>
<organism>
    <name type="scientific">Hyphomonas neptunium (strain ATCC 15444)</name>
    <dbReference type="NCBI Taxonomy" id="228405"/>
    <lineage>
        <taxon>Bacteria</taxon>
        <taxon>Pseudomonadati</taxon>
        <taxon>Pseudomonadota</taxon>
        <taxon>Alphaproteobacteria</taxon>
        <taxon>Hyphomonadales</taxon>
        <taxon>Hyphomonadaceae</taxon>
        <taxon>Hyphomonas</taxon>
    </lineage>
</organism>
<sequence length="189" mass="20218">MKKTTSLLIAALAVAPLAHAAEGGFVGGLMYAATDPVTFVAFLCMVTFLLIAARMGAFKTILGGLDTRASNIRKELEEAASLREQAAEALALAERRAQDADKEAEAIIDQAKRDAKAMLEEARRDLAEKISRREAQAAARITRAETEATSEVRRAAADAATAAARRILSEQTSVDQFEAAARDIERALS</sequence>
<reference key="1">
    <citation type="journal article" date="2006" name="J. Bacteriol.">
        <title>Comparative genomic evidence for a close relationship between the dimorphic prosthecate bacteria Hyphomonas neptunium and Caulobacter crescentus.</title>
        <authorList>
            <person name="Badger J.H."/>
            <person name="Hoover T.R."/>
            <person name="Brun Y.V."/>
            <person name="Weiner R.M."/>
            <person name="Laub M.T."/>
            <person name="Alexandre G."/>
            <person name="Mrazek J."/>
            <person name="Ren Q."/>
            <person name="Paulsen I.T."/>
            <person name="Nelson K.E."/>
            <person name="Khouri H.M."/>
            <person name="Radune D."/>
            <person name="Sosa J."/>
            <person name="Dodson R.J."/>
            <person name="Sullivan S.A."/>
            <person name="Rosovitz M.J."/>
            <person name="Madupu R."/>
            <person name="Brinkac L.M."/>
            <person name="Durkin A.S."/>
            <person name="Daugherty S.C."/>
            <person name="Kothari S.P."/>
            <person name="Giglio M.G."/>
            <person name="Zhou L."/>
            <person name="Haft D.H."/>
            <person name="Selengut J.D."/>
            <person name="Davidsen T.M."/>
            <person name="Yang Q."/>
            <person name="Zafar N."/>
            <person name="Ward N.L."/>
        </authorList>
    </citation>
    <scope>NUCLEOTIDE SEQUENCE [LARGE SCALE GENOMIC DNA]</scope>
    <source>
        <strain>ATCC 15444</strain>
    </source>
</reference>
<dbReference type="EMBL" id="CP000158">
    <property type="protein sequence ID" value="ABI76355.1"/>
    <property type="molecule type" value="Genomic_DNA"/>
</dbReference>
<dbReference type="SMR" id="Q0C0X0"/>
<dbReference type="STRING" id="228405.HNE_1922"/>
<dbReference type="KEGG" id="hne:HNE_1922"/>
<dbReference type="eggNOG" id="COG0711">
    <property type="taxonomic scope" value="Bacteria"/>
</dbReference>
<dbReference type="HOGENOM" id="CLU_079215_6_2_5"/>
<dbReference type="Proteomes" id="UP000001959">
    <property type="component" value="Chromosome"/>
</dbReference>
<dbReference type="GO" id="GO:0005886">
    <property type="term" value="C:plasma membrane"/>
    <property type="evidence" value="ECO:0007669"/>
    <property type="project" value="UniProtKB-SubCell"/>
</dbReference>
<dbReference type="GO" id="GO:0045259">
    <property type="term" value="C:proton-transporting ATP synthase complex"/>
    <property type="evidence" value="ECO:0007669"/>
    <property type="project" value="UniProtKB-KW"/>
</dbReference>
<dbReference type="GO" id="GO:0046933">
    <property type="term" value="F:proton-transporting ATP synthase activity, rotational mechanism"/>
    <property type="evidence" value="ECO:0007669"/>
    <property type="project" value="UniProtKB-UniRule"/>
</dbReference>
<dbReference type="GO" id="GO:0046961">
    <property type="term" value="F:proton-transporting ATPase activity, rotational mechanism"/>
    <property type="evidence" value="ECO:0007669"/>
    <property type="project" value="TreeGrafter"/>
</dbReference>
<dbReference type="CDD" id="cd06503">
    <property type="entry name" value="ATP-synt_Fo_b"/>
    <property type="match status" value="1"/>
</dbReference>
<dbReference type="HAMAP" id="MF_01398">
    <property type="entry name" value="ATP_synth_b_bprime"/>
    <property type="match status" value="1"/>
</dbReference>
<dbReference type="InterPro" id="IPR002146">
    <property type="entry name" value="ATP_synth_b/b'su_bac/chlpt"/>
</dbReference>
<dbReference type="InterPro" id="IPR050059">
    <property type="entry name" value="ATP_synthase_B_chain"/>
</dbReference>
<dbReference type="PANTHER" id="PTHR33445:SF1">
    <property type="entry name" value="ATP SYNTHASE SUBUNIT B"/>
    <property type="match status" value="1"/>
</dbReference>
<dbReference type="PANTHER" id="PTHR33445">
    <property type="entry name" value="ATP SYNTHASE SUBUNIT B', CHLOROPLASTIC"/>
    <property type="match status" value="1"/>
</dbReference>
<dbReference type="Pfam" id="PF00430">
    <property type="entry name" value="ATP-synt_B"/>
    <property type="match status" value="1"/>
</dbReference>
<feature type="chain" id="PRO_0000368528" description="ATP synthase subunit b">
    <location>
        <begin position="1"/>
        <end position="189"/>
    </location>
</feature>
<feature type="transmembrane region" description="Helical" evidence="1">
    <location>
        <begin position="7"/>
        <end position="27"/>
    </location>
</feature>
<proteinExistence type="inferred from homology"/>
<comment type="function">
    <text evidence="1">F(1)F(0) ATP synthase produces ATP from ADP in the presence of a proton or sodium gradient. F-type ATPases consist of two structural domains, F(1) containing the extramembraneous catalytic core and F(0) containing the membrane proton channel, linked together by a central stalk and a peripheral stalk. During catalysis, ATP synthesis in the catalytic domain of F(1) is coupled via a rotary mechanism of the central stalk subunits to proton translocation.</text>
</comment>
<comment type="function">
    <text evidence="1">Component of the F(0) channel, it forms part of the peripheral stalk, linking F(1) to F(0).</text>
</comment>
<comment type="subunit">
    <text evidence="1">F-type ATPases have 2 components, F(1) - the catalytic core - and F(0) - the membrane proton channel. F(1) has five subunits: alpha(3), beta(3), gamma(1), delta(1), epsilon(1). F(0) has three main subunits: a(1), b(2) and c(10-14). The alpha and beta chains form an alternating ring which encloses part of the gamma chain. F(1) is attached to F(0) by a central stalk formed by the gamma and epsilon chains, while a peripheral stalk is formed by the delta and b chains.</text>
</comment>
<comment type="subcellular location">
    <subcellularLocation>
        <location evidence="1">Cell inner membrane</location>
        <topology evidence="1">Single-pass membrane protein</topology>
    </subcellularLocation>
</comment>
<comment type="similarity">
    <text evidence="1">Belongs to the ATPase B chain family.</text>
</comment>
<evidence type="ECO:0000255" key="1">
    <source>
        <dbReference type="HAMAP-Rule" id="MF_01398"/>
    </source>
</evidence>
<keyword id="KW-0066">ATP synthesis</keyword>
<keyword id="KW-0997">Cell inner membrane</keyword>
<keyword id="KW-1003">Cell membrane</keyword>
<keyword id="KW-0138">CF(0)</keyword>
<keyword id="KW-0375">Hydrogen ion transport</keyword>
<keyword id="KW-0406">Ion transport</keyword>
<keyword id="KW-0472">Membrane</keyword>
<keyword id="KW-1185">Reference proteome</keyword>
<keyword id="KW-0812">Transmembrane</keyword>
<keyword id="KW-1133">Transmembrane helix</keyword>
<keyword id="KW-0813">Transport</keyword>